<sequence>MADTTGRIPLWLIGTVTGILVIGLIGFFFYGSYSGLGSSL</sequence>
<gene>
    <name evidence="1" type="primary">psbJ</name>
</gene>
<proteinExistence type="inferred from homology"/>
<name>PSBJ_MAIZE</name>
<organism>
    <name type="scientific">Zea mays</name>
    <name type="common">Maize</name>
    <dbReference type="NCBI Taxonomy" id="4577"/>
    <lineage>
        <taxon>Eukaryota</taxon>
        <taxon>Viridiplantae</taxon>
        <taxon>Streptophyta</taxon>
        <taxon>Embryophyta</taxon>
        <taxon>Tracheophyta</taxon>
        <taxon>Spermatophyta</taxon>
        <taxon>Magnoliopsida</taxon>
        <taxon>Liliopsida</taxon>
        <taxon>Poales</taxon>
        <taxon>Poaceae</taxon>
        <taxon>PACMAD clade</taxon>
        <taxon>Panicoideae</taxon>
        <taxon>Andropogonodae</taxon>
        <taxon>Andropogoneae</taxon>
        <taxon>Tripsacinae</taxon>
        <taxon>Zea</taxon>
    </lineage>
</organism>
<keyword id="KW-0150">Chloroplast</keyword>
<keyword id="KW-0472">Membrane</keyword>
<keyword id="KW-0602">Photosynthesis</keyword>
<keyword id="KW-0604">Photosystem II</keyword>
<keyword id="KW-0934">Plastid</keyword>
<keyword id="KW-0674">Reaction center</keyword>
<keyword id="KW-1185">Reference proteome</keyword>
<keyword id="KW-0793">Thylakoid</keyword>
<keyword id="KW-0812">Transmembrane</keyword>
<keyword id="KW-1133">Transmembrane helix</keyword>
<geneLocation type="chloroplast"/>
<feature type="chain" id="PRO_0000216599" description="Photosystem II reaction center protein J">
    <location>
        <begin position="1"/>
        <end position="40"/>
    </location>
</feature>
<feature type="transmembrane region" description="Helical" evidence="1">
    <location>
        <begin position="8"/>
        <end position="28"/>
    </location>
</feature>
<evidence type="ECO:0000255" key="1">
    <source>
        <dbReference type="HAMAP-Rule" id="MF_01305"/>
    </source>
</evidence>
<accession>P19444</accession>
<dbReference type="EMBL" id="J04502">
    <property type="protein sequence ID" value="AAA84475.1"/>
    <property type="molecule type" value="Genomic_DNA"/>
</dbReference>
<dbReference type="EMBL" id="X86563">
    <property type="protein sequence ID" value="CAA60299.1"/>
    <property type="molecule type" value="Genomic_DNA"/>
</dbReference>
<dbReference type="PIR" id="S58565">
    <property type="entry name" value="S58565"/>
</dbReference>
<dbReference type="RefSeq" id="NP_043038.1">
    <property type="nucleotide sequence ID" value="NC_001666.2"/>
</dbReference>
<dbReference type="SMR" id="P19444"/>
<dbReference type="FunCoup" id="P19444">
    <property type="interactions" value="85"/>
</dbReference>
<dbReference type="STRING" id="4577.P19444"/>
<dbReference type="GeneID" id="845207"/>
<dbReference type="KEGG" id="zma:845207"/>
<dbReference type="MaizeGDB" id="69556"/>
<dbReference type="InParanoid" id="P19444"/>
<dbReference type="Proteomes" id="UP000007305">
    <property type="component" value="Chloroplast"/>
</dbReference>
<dbReference type="GO" id="GO:0009535">
    <property type="term" value="C:chloroplast thylakoid membrane"/>
    <property type="evidence" value="ECO:0007669"/>
    <property type="project" value="UniProtKB-SubCell"/>
</dbReference>
<dbReference type="GO" id="GO:0009523">
    <property type="term" value="C:photosystem II"/>
    <property type="evidence" value="ECO:0000318"/>
    <property type="project" value="GO_Central"/>
</dbReference>
<dbReference type="GO" id="GO:0009539">
    <property type="term" value="C:photosystem II reaction center"/>
    <property type="evidence" value="ECO:0007669"/>
    <property type="project" value="InterPro"/>
</dbReference>
<dbReference type="GO" id="GO:0015979">
    <property type="term" value="P:photosynthesis"/>
    <property type="evidence" value="ECO:0007669"/>
    <property type="project" value="UniProtKB-UniRule"/>
</dbReference>
<dbReference type="Gene3D" id="6.10.250.2070">
    <property type="match status" value="1"/>
</dbReference>
<dbReference type="HAMAP" id="MF_01305">
    <property type="entry name" value="PSII_PsbJ"/>
    <property type="match status" value="1"/>
</dbReference>
<dbReference type="InterPro" id="IPR002682">
    <property type="entry name" value="PSII_PsbJ"/>
</dbReference>
<dbReference type="InterPro" id="IPR037267">
    <property type="entry name" value="PSII_PsbJ_sf"/>
</dbReference>
<dbReference type="NCBIfam" id="NF002722">
    <property type="entry name" value="PRK02565.1"/>
    <property type="match status" value="1"/>
</dbReference>
<dbReference type="PANTHER" id="PTHR34812">
    <property type="entry name" value="PHOTOSYSTEM II REACTION CENTER PROTEIN J"/>
    <property type="match status" value="1"/>
</dbReference>
<dbReference type="PANTHER" id="PTHR34812:SF3">
    <property type="entry name" value="PHOTOSYSTEM II REACTION CENTER PROTEIN J"/>
    <property type="match status" value="1"/>
</dbReference>
<dbReference type="Pfam" id="PF01788">
    <property type="entry name" value="PsbJ"/>
    <property type="match status" value="1"/>
</dbReference>
<dbReference type="SUPFAM" id="SSF161021">
    <property type="entry name" value="Photosystem II reaction center protein J, PsbJ"/>
    <property type="match status" value="1"/>
</dbReference>
<reference key="1">
    <citation type="submission" date="1989-05" db="EMBL/GenBank/DDBJ databases">
        <authorList>
            <person name="Haley J."/>
            <person name="Bogorad L."/>
        </authorList>
    </citation>
    <scope>NUCLEOTIDE SEQUENCE [GENOMIC DNA]</scope>
</reference>
<reference key="2">
    <citation type="journal article" date="1995" name="J. Mol. Biol.">
        <title>Complete sequence of the maize chloroplast genome: gene content, hotspots of divergence and fine tuning of genetic information by transcript editing.</title>
        <authorList>
            <person name="Maier R.M."/>
            <person name="Neckermann K."/>
            <person name="Igloi G.L."/>
            <person name="Koessel H."/>
        </authorList>
    </citation>
    <scope>NUCLEOTIDE SEQUENCE [LARGE SCALE GENOMIC DNA]</scope>
    <source>
        <strain>cv. B73</strain>
    </source>
</reference>
<comment type="function">
    <text evidence="1">One of the components of the core complex of photosystem II (PSII). PSII is a light-driven water:plastoquinone oxidoreductase that uses light energy to abstract electrons from H(2)O, generating O(2) and a proton gradient subsequently used for ATP formation. It consists of a core antenna complex that captures photons, and an electron transfer chain that converts photonic excitation into a charge separation.</text>
</comment>
<comment type="subunit">
    <text evidence="1">PSII is composed of 1 copy each of membrane proteins PsbA, PsbB, PsbC, PsbD, PsbE, PsbF, PsbH, PsbI, PsbJ, PsbK, PsbL, PsbM, PsbT, PsbX, PsbY, PsbZ, Psb30/Ycf12, at least 3 peripheral proteins of the oxygen-evolving complex and a large number of cofactors. It forms dimeric complexes.</text>
</comment>
<comment type="subcellular location">
    <subcellularLocation>
        <location evidence="1">Plastid</location>
        <location evidence="1">Chloroplast thylakoid membrane</location>
        <topology evidence="1">Single-pass membrane protein</topology>
    </subcellularLocation>
</comment>
<comment type="similarity">
    <text evidence="1">Belongs to the PsbJ family.</text>
</comment>
<protein>
    <recommendedName>
        <fullName evidence="1">Photosystem II reaction center protein J</fullName>
        <shortName evidence="1">PSII-J</shortName>
    </recommendedName>
</protein>